<accession>A9R7D9</accession>
<gene>
    <name evidence="1" type="primary">cca</name>
    <name type="ordered locus">YpAngola_A0296</name>
</gene>
<organism>
    <name type="scientific">Yersinia pestis bv. Antiqua (strain Angola)</name>
    <dbReference type="NCBI Taxonomy" id="349746"/>
    <lineage>
        <taxon>Bacteria</taxon>
        <taxon>Pseudomonadati</taxon>
        <taxon>Pseudomonadota</taxon>
        <taxon>Gammaproteobacteria</taxon>
        <taxon>Enterobacterales</taxon>
        <taxon>Yersiniaceae</taxon>
        <taxon>Yersinia</taxon>
    </lineage>
</organism>
<evidence type="ECO:0000255" key="1">
    <source>
        <dbReference type="HAMAP-Rule" id="MF_01261"/>
    </source>
</evidence>
<sequence length="412" mass="46289">MNIYLVGGAVRDSLLNLPVTEQDWVVVGATPEQLLKLGYQQVGKDFPVFLHPVSHEEYALARTERKSGQGYTGFTCYAAPDVTLEDDLLRRDLTVNAIARSADGEFIDPYHGKQDLENRVLRHVSDAFGEDPLRVLRVARFAARFAYLGFTIAPETMSLMSNMAQSGELSALTPERVWKETEKALKTQSPHVYFQVLRDCGALAVLFPEIERLFGVPAPEKWHPEIDTGIHTLMTLAIAAQLSPEVDIRFAALCHDLGKGLTPKEHWPHHHGHGPAGVKLVEQLCQRLRIPNPVRDLAKLVAEYHDLIHTVNKLRPETLLKLFNAIDVWRKPERLEQMIMTSEADARGRTGFENNPYPQGDYLRAAFQIANGVSIQEVVASGLQGLAIRDELQRRRQQALAEWKQTQETASI</sequence>
<feature type="chain" id="PRO_1000140063" description="Multifunctional CCA protein">
    <location>
        <begin position="1"/>
        <end position="412"/>
    </location>
</feature>
<feature type="domain" description="HD" evidence="1">
    <location>
        <begin position="228"/>
        <end position="329"/>
    </location>
</feature>
<feature type="binding site" evidence="1">
    <location>
        <position position="8"/>
    </location>
    <ligand>
        <name>ATP</name>
        <dbReference type="ChEBI" id="CHEBI:30616"/>
    </ligand>
</feature>
<feature type="binding site" evidence="1">
    <location>
        <position position="8"/>
    </location>
    <ligand>
        <name>CTP</name>
        <dbReference type="ChEBI" id="CHEBI:37563"/>
    </ligand>
</feature>
<feature type="binding site" evidence="1">
    <location>
        <position position="11"/>
    </location>
    <ligand>
        <name>ATP</name>
        <dbReference type="ChEBI" id="CHEBI:30616"/>
    </ligand>
</feature>
<feature type="binding site" evidence="1">
    <location>
        <position position="11"/>
    </location>
    <ligand>
        <name>CTP</name>
        <dbReference type="ChEBI" id="CHEBI:37563"/>
    </ligand>
</feature>
<feature type="binding site" evidence="1">
    <location>
        <position position="21"/>
    </location>
    <ligand>
        <name>Mg(2+)</name>
        <dbReference type="ChEBI" id="CHEBI:18420"/>
    </ligand>
</feature>
<feature type="binding site" evidence="1">
    <location>
        <position position="23"/>
    </location>
    <ligand>
        <name>Mg(2+)</name>
        <dbReference type="ChEBI" id="CHEBI:18420"/>
    </ligand>
</feature>
<feature type="binding site" evidence="1">
    <location>
        <position position="91"/>
    </location>
    <ligand>
        <name>ATP</name>
        <dbReference type="ChEBI" id="CHEBI:30616"/>
    </ligand>
</feature>
<feature type="binding site" evidence="1">
    <location>
        <position position="91"/>
    </location>
    <ligand>
        <name>CTP</name>
        <dbReference type="ChEBI" id="CHEBI:37563"/>
    </ligand>
</feature>
<feature type="binding site" evidence="1">
    <location>
        <position position="137"/>
    </location>
    <ligand>
        <name>ATP</name>
        <dbReference type="ChEBI" id="CHEBI:30616"/>
    </ligand>
</feature>
<feature type="binding site" evidence="1">
    <location>
        <position position="137"/>
    </location>
    <ligand>
        <name>CTP</name>
        <dbReference type="ChEBI" id="CHEBI:37563"/>
    </ligand>
</feature>
<feature type="binding site" evidence="1">
    <location>
        <position position="140"/>
    </location>
    <ligand>
        <name>ATP</name>
        <dbReference type="ChEBI" id="CHEBI:30616"/>
    </ligand>
</feature>
<feature type="binding site" evidence="1">
    <location>
        <position position="140"/>
    </location>
    <ligand>
        <name>CTP</name>
        <dbReference type="ChEBI" id="CHEBI:37563"/>
    </ligand>
</feature>
<proteinExistence type="inferred from homology"/>
<comment type="function">
    <text evidence="1">Catalyzes the addition and repair of the essential 3'-terminal CCA sequence in tRNAs without using a nucleic acid template. Adds these three nucleotides in the order of C, C, and A to the tRNA nucleotide-73, using CTP and ATP as substrates and producing inorganic pyrophosphate. tRNA 3'-terminal CCA addition is required both for tRNA processing and repair. Also involved in tRNA surveillance by mediating tandem CCA addition to generate a CCACCA at the 3' terminus of unstable tRNAs. While stable tRNAs receive only 3'-terminal CCA, unstable tRNAs are marked with CCACCA and rapidly degraded.</text>
</comment>
<comment type="catalytic activity">
    <reaction evidence="1">
        <text>a tRNA precursor + 2 CTP + ATP = a tRNA with a 3' CCA end + 3 diphosphate</text>
        <dbReference type="Rhea" id="RHEA:14433"/>
        <dbReference type="Rhea" id="RHEA-COMP:10465"/>
        <dbReference type="Rhea" id="RHEA-COMP:10468"/>
        <dbReference type="ChEBI" id="CHEBI:30616"/>
        <dbReference type="ChEBI" id="CHEBI:33019"/>
        <dbReference type="ChEBI" id="CHEBI:37563"/>
        <dbReference type="ChEBI" id="CHEBI:74896"/>
        <dbReference type="ChEBI" id="CHEBI:83071"/>
        <dbReference type="EC" id="2.7.7.72"/>
    </reaction>
</comment>
<comment type="catalytic activity">
    <reaction evidence="1">
        <text>a tRNA with a 3' CCA end + 2 CTP + ATP = a tRNA with a 3' CCACCA end + 3 diphosphate</text>
        <dbReference type="Rhea" id="RHEA:76235"/>
        <dbReference type="Rhea" id="RHEA-COMP:10468"/>
        <dbReference type="Rhea" id="RHEA-COMP:18655"/>
        <dbReference type="ChEBI" id="CHEBI:30616"/>
        <dbReference type="ChEBI" id="CHEBI:33019"/>
        <dbReference type="ChEBI" id="CHEBI:37563"/>
        <dbReference type="ChEBI" id="CHEBI:83071"/>
        <dbReference type="ChEBI" id="CHEBI:195187"/>
    </reaction>
    <physiologicalReaction direction="left-to-right" evidence="1">
        <dbReference type="Rhea" id="RHEA:76236"/>
    </physiologicalReaction>
</comment>
<comment type="cofactor">
    <cofactor evidence="1">
        <name>Mg(2+)</name>
        <dbReference type="ChEBI" id="CHEBI:18420"/>
    </cofactor>
    <text evidence="1">Magnesium is required for nucleotidyltransferase activity.</text>
</comment>
<comment type="cofactor">
    <cofactor evidence="1">
        <name>Ni(2+)</name>
        <dbReference type="ChEBI" id="CHEBI:49786"/>
    </cofactor>
    <text evidence="1">Nickel for phosphatase activity.</text>
</comment>
<comment type="subunit">
    <text evidence="1">Monomer. Can also form homodimers and oligomers.</text>
</comment>
<comment type="domain">
    <text evidence="1">Comprises two domains: an N-terminal domain containing the nucleotidyltransferase activity and a C-terminal HD domain associated with both phosphodiesterase and phosphatase activities.</text>
</comment>
<comment type="miscellaneous">
    <text evidence="1">A single active site specifically recognizes both ATP and CTP and is responsible for their addition.</text>
</comment>
<comment type="similarity">
    <text evidence="1">Belongs to the tRNA nucleotidyltransferase/poly(A) polymerase family. Bacterial CCA-adding enzyme type 1 subfamily.</text>
</comment>
<reference key="1">
    <citation type="journal article" date="2010" name="J. Bacteriol.">
        <title>Genome sequence of the deep-rooted Yersinia pestis strain Angola reveals new insights into the evolution and pangenome of the plague bacterium.</title>
        <authorList>
            <person name="Eppinger M."/>
            <person name="Worsham P.L."/>
            <person name="Nikolich M.P."/>
            <person name="Riley D.R."/>
            <person name="Sebastian Y."/>
            <person name="Mou S."/>
            <person name="Achtman M."/>
            <person name="Lindler L.E."/>
            <person name="Ravel J."/>
        </authorList>
    </citation>
    <scope>NUCLEOTIDE SEQUENCE [LARGE SCALE GENOMIC DNA]</scope>
    <source>
        <strain>Angola</strain>
    </source>
</reference>
<dbReference type="EC" id="2.7.7.72" evidence="1"/>
<dbReference type="EC" id="3.1.3.-" evidence="1"/>
<dbReference type="EC" id="3.1.4.-" evidence="1"/>
<dbReference type="EMBL" id="CP000901">
    <property type="protein sequence ID" value="ABX87090.1"/>
    <property type="molecule type" value="Genomic_DNA"/>
</dbReference>
<dbReference type="RefSeq" id="WP_002212197.1">
    <property type="nucleotide sequence ID" value="NZ_CP009935.1"/>
</dbReference>
<dbReference type="SMR" id="A9R7D9"/>
<dbReference type="KEGG" id="ypg:YpAngola_A0296"/>
<dbReference type="PATRIC" id="fig|349746.12.peg.1245"/>
<dbReference type="GO" id="GO:0005524">
    <property type="term" value="F:ATP binding"/>
    <property type="evidence" value="ECO:0007669"/>
    <property type="project" value="UniProtKB-UniRule"/>
</dbReference>
<dbReference type="GO" id="GO:0004810">
    <property type="term" value="F:CCA tRNA nucleotidyltransferase activity"/>
    <property type="evidence" value="ECO:0007669"/>
    <property type="project" value="UniProtKB-UniRule"/>
</dbReference>
<dbReference type="GO" id="GO:0004112">
    <property type="term" value="F:cyclic-nucleotide phosphodiesterase activity"/>
    <property type="evidence" value="ECO:0007669"/>
    <property type="project" value="UniProtKB-UniRule"/>
</dbReference>
<dbReference type="GO" id="GO:0000287">
    <property type="term" value="F:magnesium ion binding"/>
    <property type="evidence" value="ECO:0007669"/>
    <property type="project" value="UniProtKB-UniRule"/>
</dbReference>
<dbReference type="GO" id="GO:0016791">
    <property type="term" value="F:phosphatase activity"/>
    <property type="evidence" value="ECO:0007669"/>
    <property type="project" value="UniProtKB-UniRule"/>
</dbReference>
<dbReference type="GO" id="GO:0000049">
    <property type="term" value="F:tRNA binding"/>
    <property type="evidence" value="ECO:0007669"/>
    <property type="project" value="UniProtKB-UniRule"/>
</dbReference>
<dbReference type="GO" id="GO:0042245">
    <property type="term" value="P:RNA repair"/>
    <property type="evidence" value="ECO:0007669"/>
    <property type="project" value="UniProtKB-KW"/>
</dbReference>
<dbReference type="GO" id="GO:0001680">
    <property type="term" value="P:tRNA 3'-terminal CCA addition"/>
    <property type="evidence" value="ECO:0007669"/>
    <property type="project" value="UniProtKB-UniRule"/>
</dbReference>
<dbReference type="CDD" id="cd00077">
    <property type="entry name" value="HDc"/>
    <property type="match status" value="1"/>
</dbReference>
<dbReference type="CDD" id="cd05398">
    <property type="entry name" value="NT_ClassII-CCAase"/>
    <property type="match status" value="1"/>
</dbReference>
<dbReference type="FunFam" id="1.10.3090.10:FF:000001">
    <property type="entry name" value="Multifunctional CCA protein"/>
    <property type="match status" value="1"/>
</dbReference>
<dbReference type="FunFam" id="3.30.460.10:FF:000016">
    <property type="entry name" value="Multifunctional CCA protein"/>
    <property type="match status" value="1"/>
</dbReference>
<dbReference type="Gene3D" id="3.30.460.10">
    <property type="entry name" value="Beta Polymerase, domain 2"/>
    <property type="match status" value="1"/>
</dbReference>
<dbReference type="Gene3D" id="1.10.3090.10">
    <property type="entry name" value="cca-adding enzyme, domain 2"/>
    <property type="match status" value="1"/>
</dbReference>
<dbReference type="HAMAP" id="MF_01261">
    <property type="entry name" value="CCA_bact_type1"/>
    <property type="match status" value="1"/>
</dbReference>
<dbReference type="HAMAP" id="MF_01262">
    <property type="entry name" value="CCA_bact_type2"/>
    <property type="match status" value="1"/>
</dbReference>
<dbReference type="InterPro" id="IPR012006">
    <property type="entry name" value="CCA_bact"/>
</dbReference>
<dbReference type="InterPro" id="IPR003607">
    <property type="entry name" value="HD/PDEase_dom"/>
</dbReference>
<dbReference type="InterPro" id="IPR006674">
    <property type="entry name" value="HD_domain"/>
</dbReference>
<dbReference type="InterPro" id="IPR043519">
    <property type="entry name" value="NT_sf"/>
</dbReference>
<dbReference type="InterPro" id="IPR002646">
    <property type="entry name" value="PolA_pol_head_dom"/>
</dbReference>
<dbReference type="InterPro" id="IPR032828">
    <property type="entry name" value="PolyA_RNA-bd"/>
</dbReference>
<dbReference type="InterPro" id="IPR050124">
    <property type="entry name" value="tRNA_CCA-adding_enzyme"/>
</dbReference>
<dbReference type="NCBIfam" id="NF008137">
    <property type="entry name" value="PRK10885.1"/>
    <property type="match status" value="1"/>
</dbReference>
<dbReference type="PANTHER" id="PTHR47545">
    <property type="entry name" value="MULTIFUNCTIONAL CCA PROTEIN"/>
    <property type="match status" value="1"/>
</dbReference>
<dbReference type="PANTHER" id="PTHR47545:SF1">
    <property type="entry name" value="MULTIFUNCTIONAL CCA PROTEIN"/>
    <property type="match status" value="1"/>
</dbReference>
<dbReference type="Pfam" id="PF01966">
    <property type="entry name" value="HD"/>
    <property type="match status" value="1"/>
</dbReference>
<dbReference type="Pfam" id="PF01743">
    <property type="entry name" value="PolyA_pol"/>
    <property type="match status" value="1"/>
</dbReference>
<dbReference type="Pfam" id="PF12627">
    <property type="entry name" value="PolyA_pol_RNAbd"/>
    <property type="match status" value="1"/>
</dbReference>
<dbReference type="PIRSF" id="PIRSF000813">
    <property type="entry name" value="CCA_bact"/>
    <property type="match status" value="1"/>
</dbReference>
<dbReference type="SMART" id="SM00471">
    <property type="entry name" value="HDc"/>
    <property type="match status" value="1"/>
</dbReference>
<dbReference type="SUPFAM" id="SSF81301">
    <property type="entry name" value="Nucleotidyltransferase"/>
    <property type="match status" value="1"/>
</dbReference>
<dbReference type="SUPFAM" id="SSF81891">
    <property type="entry name" value="Poly A polymerase C-terminal region-like"/>
    <property type="match status" value="1"/>
</dbReference>
<dbReference type="PROSITE" id="PS51831">
    <property type="entry name" value="HD"/>
    <property type="match status" value="1"/>
</dbReference>
<protein>
    <recommendedName>
        <fullName evidence="1">Multifunctional CCA protein</fullName>
    </recommendedName>
    <domain>
        <recommendedName>
            <fullName evidence="1">CCA-adding enzyme</fullName>
            <ecNumber evidence="1">2.7.7.72</ecNumber>
        </recommendedName>
        <alternativeName>
            <fullName evidence="1">CCA tRNA nucleotidyltransferase</fullName>
        </alternativeName>
        <alternativeName>
            <fullName evidence="1">tRNA CCA-pyrophosphorylase</fullName>
        </alternativeName>
        <alternativeName>
            <fullName evidence="1">tRNA adenylyl-/cytidylyl-transferase</fullName>
        </alternativeName>
        <alternativeName>
            <fullName evidence="1">tRNA nucleotidyltransferase</fullName>
        </alternativeName>
        <alternativeName>
            <fullName evidence="1">tRNA-NT</fullName>
        </alternativeName>
    </domain>
    <domain>
        <recommendedName>
            <fullName evidence="1">2'-nucleotidase</fullName>
            <ecNumber evidence="1">3.1.3.-</ecNumber>
        </recommendedName>
    </domain>
    <domain>
        <recommendedName>
            <fullName evidence="1">2',3'-cyclic phosphodiesterase</fullName>
            <ecNumber evidence="1">3.1.4.-</ecNumber>
        </recommendedName>
    </domain>
    <domain>
        <recommendedName>
            <fullName evidence="1">Phosphatase</fullName>
            <ecNumber evidence="1">3.1.3.-</ecNumber>
        </recommendedName>
    </domain>
</protein>
<name>CCA_YERPG</name>
<keyword id="KW-0067">ATP-binding</keyword>
<keyword id="KW-0378">Hydrolase</keyword>
<keyword id="KW-0460">Magnesium</keyword>
<keyword id="KW-0479">Metal-binding</keyword>
<keyword id="KW-0511">Multifunctional enzyme</keyword>
<keyword id="KW-0533">Nickel</keyword>
<keyword id="KW-0547">Nucleotide-binding</keyword>
<keyword id="KW-0548">Nucleotidyltransferase</keyword>
<keyword id="KW-0692">RNA repair</keyword>
<keyword id="KW-0694">RNA-binding</keyword>
<keyword id="KW-0808">Transferase</keyword>
<keyword id="KW-0819">tRNA processing</keyword>